<evidence type="ECO:0000250" key="1"/>
<evidence type="ECO:0000250" key="2">
    <source>
        <dbReference type="UniProtKB" id="P11172"/>
    </source>
</evidence>
<evidence type="ECO:0000305" key="3"/>
<comment type="function">
    <text evidence="2">Bifunctional enzyme catalyzing the last two steps of de novo pyrimidine biosynthesis, orotate phosphoribosyltransferase (OPRT), which converts orotate to orotidine-5'-monophosphate (OMP), and orotidine-5'-monophosphate decarboxylase (ODC), the terminal enzymatic reaction that decarboxylates OMP to uridine monophosphate (UMP).</text>
</comment>
<comment type="catalytic activity">
    <reaction evidence="2">
        <text>orotidine 5'-phosphate + diphosphate = orotate + 5-phospho-alpha-D-ribose 1-diphosphate</text>
        <dbReference type="Rhea" id="RHEA:10380"/>
        <dbReference type="ChEBI" id="CHEBI:30839"/>
        <dbReference type="ChEBI" id="CHEBI:33019"/>
        <dbReference type="ChEBI" id="CHEBI:57538"/>
        <dbReference type="ChEBI" id="CHEBI:58017"/>
        <dbReference type="EC" id="2.4.2.10"/>
    </reaction>
    <physiologicalReaction direction="right-to-left" evidence="2">
        <dbReference type="Rhea" id="RHEA:10382"/>
    </physiologicalReaction>
</comment>
<comment type="catalytic activity">
    <reaction evidence="2">
        <text>orotidine 5'-phosphate + H(+) = UMP + CO2</text>
        <dbReference type="Rhea" id="RHEA:11596"/>
        <dbReference type="ChEBI" id="CHEBI:15378"/>
        <dbReference type="ChEBI" id="CHEBI:16526"/>
        <dbReference type="ChEBI" id="CHEBI:57538"/>
        <dbReference type="ChEBI" id="CHEBI:57865"/>
        <dbReference type="EC" id="4.1.1.23"/>
    </reaction>
    <physiologicalReaction direction="left-to-right" evidence="2">
        <dbReference type="Rhea" id="RHEA:11597"/>
    </physiologicalReaction>
</comment>
<comment type="pathway">
    <text evidence="2">Pyrimidine metabolism; UMP biosynthesis via de novo pathway; UMP from orotate: step 1/2.</text>
</comment>
<comment type="pathway">
    <text evidence="2">Pyrimidine metabolism; UMP biosynthesis via de novo pathway; UMP from orotate: step 2/2.</text>
</comment>
<comment type="similarity">
    <text evidence="3">In the N-terminal section; belongs to the purine/pyrimidine phosphoribosyltransferase family.</text>
</comment>
<comment type="similarity">
    <text evidence="3">In the C-terminal section; belongs to the OMP decarboxylase family.</text>
</comment>
<organism>
    <name type="scientific">Naegleria gruberi</name>
    <name type="common">Amoeba</name>
    <dbReference type="NCBI Taxonomy" id="5762"/>
    <lineage>
        <taxon>Eukaryota</taxon>
        <taxon>Discoba</taxon>
        <taxon>Heterolobosea</taxon>
        <taxon>Tetramitia</taxon>
        <taxon>Eutetramitia</taxon>
        <taxon>Vahlkampfiidae</taxon>
        <taxon>Naegleria</taxon>
    </lineage>
</organism>
<dbReference type="EC" id="2.4.2.10" evidence="2"/>
<dbReference type="EC" id="4.1.1.23" evidence="2"/>
<dbReference type="EMBL" id="L08073">
    <property type="protein sequence ID" value="AAA29385.1"/>
    <property type="molecule type" value="Genomic_DNA"/>
</dbReference>
<dbReference type="SMR" id="Q25566"/>
<dbReference type="VEuPathDB" id="AmoebaDB:NAEGRDRAFT_82737"/>
<dbReference type="eggNOG" id="KOG1377">
    <property type="taxonomic scope" value="Eukaryota"/>
</dbReference>
<dbReference type="UniPathway" id="UPA00070">
    <property type="reaction ID" value="UER00119"/>
</dbReference>
<dbReference type="UniPathway" id="UPA00070">
    <property type="reaction ID" value="UER00120"/>
</dbReference>
<dbReference type="GO" id="GO:0004588">
    <property type="term" value="F:orotate phosphoribosyltransferase activity"/>
    <property type="evidence" value="ECO:0000250"/>
    <property type="project" value="UniProtKB"/>
</dbReference>
<dbReference type="GO" id="GO:0004590">
    <property type="term" value="F:orotidine-5'-phosphate decarboxylase activity"/>
    <property type="evidence" value="ECO:0000250"/>
    <property type="project" value="UniProtKB"/>
</dbReference>
<dbReference type="GO" id="GO:0006207">
    <property type="term" value="P:'de novo' pyrimidine nucleobase biosynthetic process"/>
    <property type="evidence" value="ECO:0007669"/>
    <property type="project" value="InterPro"/>
</dbReference>
<dbReference type="GO" id="GO:0044205">
    <property type="term" value="P:'de novo' UMP biosynthetic process"/>
    <property type="evidence" value="ECO:0007669"/>
    <property type="project" value="UniProtKB-UniPathway"/>
</dbReference>
<dbReference type="GO" id="GO:0006222">
    <property type="term" value="P:UMP biosynthetic process"/>
    <property type="evidence" value="ECO:0000250"/>
    <property type="project" value="UniProtKB"/>
</dbReference>
<dbReference type="CDD" id="cd04725">
    <property type="entry name" value="OMP_decarboxylase_like"/>
    <property type="match status" value="1"/>
</dbReference>
<dbReference type="CDD" id="cd06223">
    <property type="entry name" value="PRTases_typeI"/>
    <property type="match status" value="1"/>
</dbReference>
<dbReference type="FunFam" id="3.20.20.70:FF:000114">
    <property type="entry name" value="Decarboxylase,orotidine phosphate"/>
    <property type="match status" value="1"/>
</dbReference>
<dbReference type="Gene3D" id="3.40.50.2020">
    <property type="match status" value="1"/>
</dbReference>
<dbReference type="Gene3D" id="3.20.20.70">
    <property type="entry name" value="Aldolase class I"/>
    <property type="match status" value="1"/>
</dbReference>
<dbReference type="HAMAP" id="MF_01208">
    <property type="entry name" value="PyrE"/>
    <property type="match status" value="1"/>
</dbReference>
<dbReference type="InterPro" id="IPR013785">
    <property type="entry name" value="Aldolase_TIM"/>
</dbReference>
<dbReference type="InterPro" id="IPR014732">
    <property type="entry name" value="OMPdecase"/>
</dbReference>
<dbReference type="InterPro" id="IPR001754">
    <property type="entry name" value="OMPdeCOase_dom"/>
</dbReference>
<dbReference type="InterPro" id="IPR023031">
    <property type="entry name" value="OPRT"/>
</dbReference>
<dbReference type="InterPro" id="IPR000836">
    <property type="entry name" value="PRibTrfase_dom"/>
</dbReference>
<dbReference type="InterPro" id="IPR029057">
    <property type="entry name" value="PRTase-like"/>
</dbReference>
<dbReference type="InterPro" id="IPR011060">
    <property type="entry name" value="RibuloseP-bd_barrel"/>
</dbReference>
<dbReference type="NCBIfam" id="TIGR01740">
    <property type="entry name" value="pyrF"/>
    <property type="match status" value="1"/>
</dbReference>
<dbReference type="PANTHER" id="PTHR19278">
    <property type="entry name" value="OROTATE PHOSPHORIBOSYLTRANSFERASE"/>
    <property type="match status" value="1"/>
</dbReference>
<dbReference type="PANTHER" id="PTHR19278:SF9">
    <property type="entry name" value="URIDINE 5'-MONOPHOSPHATE SYNTHASE"/>
    <property type="match status" value="1"/>
</dbReference>
<dbReference type="Pfam" id="PF00215">
    <property type="entry name" value="OMPdecase"/>
    <property type="match status" value="1"/>
</dbReference>
<dbReference type="SMART" id="SM00934">
    <property type="entry name" value="OMPdecase"/>
    <property type="match status" value="1"/>
</dbReference>
<dbReference type="SUPFAM" id="SSF53271">
    <property type="entry name" value="PRTase-like"/>
    <property type="match status" value="1"/>
</dbReference>
<dbReference type="SUPFAM" id="SSF51366">
    <property type="entry name" value="Ribulose-phoshate binding barrel"/>
    <property type="match status" value="1"/>
</dbReference>
<dbReference type="PROSITE" id="PS00103">
    <property type="entry name" value="PUR_PYR_PR_TRANSFER"/>
    <property type="match status" value="1"/>
</dbReference>
<gene>
    <name type="primary">UMP</name>
</gene>
<keyword id="KW-0210">Decarboxylase</keyword>
<keyword id="KW-0328">Glycosyltransferase</keyword>
<keyword id="KW-0456">Lyase</keyword>
<keyword id="KW-0511">Multifunctional enzyme</keyword>
<keyword id="KW-0665">Pyrimidine biosynthesis</keyword>
<keyword id="KW-0808">Transferase</keyword>
<proteinExistence type="inferred from homology"/>
<feature type="chain" id="PRO_0000139655" description="Uridine 5'-monophosphate synthase">
    <location>
        <begin position="1"/>
        <end position="494"/>
    </location>
</feature>
<feature type="active site" evidence="1">
    <location>
        <position position="322"/>
    </location>
</feature>
<feature type="binding site" evidence="2">
    <location>
        <position position="266"/>
    </location>
    <ligand>
        <name>UMP</name>
        <dbReference type="ChEBI" id="CHEBI:57865"/>
    </ligand>
</feature>
<feature type="binding site" evidence="2">
    <location>
        <begin position="288"/>
        <end position="290"/>
    </location>
    <ligand>
        <name>UMP</name>
        <dbReference type="ChEBI" id="CHEBI:57865"/>
    </ligand>
</feature>
<feature type="binding site" evidence="2">
    <location>
        <position position="288"/>
    </location>
    <ligand>
        <name>orotidine 5'-phosphate</name>
        <dbReference type="ChEBI" id="CHEBI:57538"/>
    </ligand>
</feature>
<feature type="binding site" evidence="2">
    <location>
        <position position="322"/>
    </location>
    <ligand>
        <name>orotidine 5'-phosphate</name>
        <dbReference type="ChEBI" id="CHEBI:57538"/>
    </ligand>
</feature>
<feature type="binding site" evidence="2">
    <location>
        <position position="325"/>
    </location>
    <ligand>
        <name>orotidine 5'-phosphate</name>
        <dbReference type="ChEBI" id="CHEBI:57538"/>
    </ligand>
</feature>
<feature type="binding site" evidence="2">
    <location>
        <position position="325"/>
    </location>
    <ligand>
        <name>UMP</name>
        <dbReference type="ChEBI" id="CHEBI:57865"/>
    </ligand>
</feature>
<feature type="binding site" evidence="2">
    <location>
        <position position="385"/>
    </location>
    <ligand>
        <name>orotidine 5'-phosphate</name>
        <dbReference type="ChEBI" id="CHEBI:57538"/>
    </ligand>
</feature>
<feature type="binding site" evidence="2">
    <location>
        <position position="385"/>
    </location>
    <ligand>
        <name>UMP</name>
        <dbReference type="ChEBI" id="CHEBI:57865"/>
    </ligand>
</feature>
<feature type="binding site" evidence="2">
    <location>
        <begin position="444"/>
        <end position="446"/>
    </location>
    <ligand>
        <name>orotidine 5'-phosphate</name>
        <dbReference type="ChEBI" id="CHEBI:57538"/>
    </ligand>
</feature>
<feature type="binding site" evidence="2">
    <location>
        <begin position="444"/>
        <end position="446"/>
    </location>
    <ligand>
        <name>UMP</name>
        <dbReference type="ChEBI" id="CHEBI:57865"/>
    </ligand>
</feature>
<feature type="binding site" evidence="2">
    <location>
        <begin position="464"/>
        <end position="465"/>
    </location>
    <ligand>
        <name>orotidine 5'-phosphate</name>
        <dbReference type="ChEBI" id="CHEBI:57538"/>
    </ligand>
</feature>
<feature type="binding site" evidence="2">
    <location>
        <begin position="464"/>
        <end position="465"/>
    </location>
    <ligand>
        <name>UMP</name>
        <dbReference type="ChEBI" id="CHEBI:57865"/>
    </ligand>
</feature>
<name>UMPS_NAEGR</name>
<protein>
    <recommendedName>
        <fullName>Uridine 5'-monophosphate synthase</fullName>
        <shortName>UMP synthase</shortName>
    </recommendedName>
    <domain>
        <recommendedName>
            <fullName>Orotate phosphoribosyltransferase</fullName>
            <shortName>OPRTase</shortName>
            <ecNumber evidence="2">2.4.2.10</ecNumber>
        </recommendedName>
    </domain>
    <domain>
        <recommendedName>
            <fullName>Orotidine 5'-phosphate decarboxylase</fullName>
            <ecNumber evidence="2">4.1.1.23</ecNumber>
        </recommendedName>
        <alternativeName>
            <fullName>OMPdecase</fullName>
        </alternativeName>
    </domain>
</protein>
<reference key="1">
    <citation type="submission" date="1993-02" db="EMBL/GenBank/DDBJ databases">
        <title>A bifunctional UMP synthase gene from Naegleria gruberi expresses OMP decarboxylase activity in bacteria and in yeast.</title>
        <authorList>
            <person name="Remillard S.P."/>
            <person name="Lai E.Y."/>
            <person name="Fulton C."/>
        </authorList>
    </citation>
    <scope>NUCLEOTIDE SEQUENCE [GENOMIC DNA]</scope>
    <source>
        <strain>ATCC 30223 / NEG</strain>
    </source>
</reference>
<sequence length="494" mass="55809">METTTIDIQALKKELVLDLIQIGALKFGRFTLKSGIVSPFYVDLRIIGPKMLRQFSVLLYHVMTVKGLTNMEKRVICGVPYSALTFSSCMSMTYDLPMVICRKERKQYGTGNMVEGIYTKNETNCILIEDVITSGASIVETAEKLENEGLLVTDALVFLTREQLPLTNGMHILKKGEKVYNVHPCLTMTEVTQVLLDEGKMSQEQREDILQFIGTNTFSETKTTAVPQKKKELTFTERAELTNNEFSKKLFKLMEEKQTNLCVAADITSKDDLLKLADETGPEICMLKTHIDTLDDQPDEQFTQQLKELAKKHNFLIFEDRKLADIGQVVKQQYARGPFKIAQWSDLCNSHLVSGGSATVKALKESLKEENITEPRGLLLIAQMSTEGATTGESTKQEALKVALENPDFVSGFICQSKLRDDLDQFLYCTPGVRLDVKGDSLGQQYNSPEYVVCEKKCDVIIVGRGIYHDKERQNAAKLYRKLGWEAYQKRIQQ</sequence>
<accession>Q25566</accession>